<accession>P85531</accession>
<comment type="function">
    <text evidence="4">Mediates visceral muscle contractile activity (myotropic activity).</text>
</comment>
<comment type="subcellular location">
    <subcellularLocation>
        <location evidence="4">Secreted</location>
    </subcellularLocation>
</comment>
<comment type="similarity">
    <text evidence="1">Belongs to the periviscerokinin family.</text>
</comment>
<name>PVK1_APTFU</name>
<proteinExistence type="evidence at protein level"/>
<dbReference type="GO" id="GO:0005576">
    <property type="term" value="C:extracellular region"/>
    <property type="evidence" value="ECO:0007669"/>
    <property type="project" value="UniProtKB-SubCell"/>
</dbReference>
<dbReference type="GO" id="GO:0007218">
    <property type="term" value="P:neuropeptide signaling pathway"/>
    <property type="evidence" value="ECO:0007669"/>
    <property type="project" value="UniProtKB-KW"/>
</dbReference>
<dbReference type="InterPro" id="IPR013231">
    <property type="entry name" value="Periviscerokinin"/>
</dbReference>
<dbReference type="Pfam" id="PF08259">
    <property type="entry name" value="Periviscerokin"/>
    <property type="match status" value="1"/>
</dbReference>
<sequence length="11" mass="1091">GSSGLIPFGRT</sequence>
<protein>
    <recommendedName>
        <fullName evidence="3">Periviscerokinin-1</fullName>
        <shortName evidence="3">AptFu-PVK-1</shortName>
    </recommendedName>
</protein>
<keyword id="KW-0027">Amidation</keyword>
<keyword id="KW-0903">Direct protein sequencing</keyword>
<keyword id="KW-0527">Neuropeptide</keyword>
<keyword id="KW-0964">Secreted</keyword>
<feature type="peptide" id="PRO_0000378728" description="Periviscerokinin-1" evidence="2">
    <location>
        <begin position="1"/>
        <end position="11"/>
    </location>
</feature>
<feature type="modified residue" description="Threonine amide" evidence="2">
    <location>
        <position position="11"/>
    </location>
</feature>
<reference evidence="4" key="1">
    <citation type="journal article" date="2009" name="BMC Evol. Biol.">
        <title>A proteomic approach for studying insect phylogeny: CAPA peptides of ancient insect taxa (Dictyoptera, Blattoptera) as a test case.</title>
        <authorList>
            <person name="Roth S."/>
            <person name="Fromm B."/>
            <person name="Gaede G."/>
            <person name="Predel R."/>
        </authorList>
    </citation>
    <scope>PROTEIN SEQUENCE</scope>
    <scope>AMIDATION AT THR-11</scope>
    <source>
        <tissue evidence="2">Abdominal perisympathetic organs</tissue>
    </source>
</reference>
<evidence type="ECO:0000255" key="1"/>
<evidence type="ECO:0000269" key="2">
    <source>
    </source>
</evidence>
<evidence type="ECO:0000303" key="3">
    <source>
    </source>
</evidence>
<evidence type="ECO:0000305" key="4"/>
<organism>
    <name type="scientific">Aptera fusca</name>
    <name type="common">Cape Mountain cockroach</name>
    <name type="synonym">Giant Table Mountain cockroach</name>
    <dbReference type="NCBI Taxonomy" id="344696"/>
    <lineage>
        <taxon>Eukaryota</taxon>
        <taxon>Metazoa</taxon>
        <taxon>Ecdysozoa</taxon>
        <taxon>Arthropoda</taxon>
        <taxon>Hexapoda</taxon>
        <taxon>Insecta</taxon>
        <taxon>Pterygota</taxon>
        <taxon>Neoptera</taxon>
        <taxon>Polyneoptera</taxon>
        <taxon>Dictyoptera</taxon>
        <taxon>Blattodea</taxon>
        <taxon>Blaberoidea</taxon>
        <taxon>Blaberidae</taxon>
        <taxon>Epilamprinae</taxon>
        <taxon>Aptera</taxon>
    </lineage>
</organism>